<proteinExistence type="inferred from homology"/>
<reference key="1">
    <citation type="journal article" date="2010" name="PLoS Genet.">
        <title>Genome sequence of the plant growth promoting endophytic bacterium Enterobacter sp. 638.</title>
        <authorList>
            <person name="Taghavi S."/>
            <person name="van der Lelie D."/>
            <person name="Hoffman A."/>
            <person name="Zhang Y.B."/>
            <person name="Walla M.D."/>
            <person name="Vangronsveld J."/>
            <person name="Newman L."/>
            <person name="Monchy S."/>
        </authorList>
    </citation>
    <scope>NUCLEOTIDE SEQUENCE [LARGE SCALE GENOMIC DNA]</scope>
    <source>
        <strain>638</strain>
    </source>
</reference>
<keyword id="KW-0175">Coiled coil</keyword>
<keyword id="KW-0963">Cytoplasm</keyword>
<name>TMAR_ENT38</name>
<accession>A4WC14</accession>
<dbReference type="EMBL" id="CP000653">
    <property type="protein sequence ID" value="ABP61244.1"/>
    <property type="molecule type" value="Genomic_DNA"/>
</dbReference>
<dbReference type="RefSeq" id="WP_015959577.1">
    <property type="nucleotide sequence ID" value="NC_009436.1"/>
</dbReference>
<dbReference type="SMR" id="A4WC14"/>
<dbReference type="STRING" id="399742.Ent638_2575"/>
<dbReference type="GeneID" id="93305546"/>
<dbReference type="KEGG" id="ent:Ent638_2575"/>
<dbReference type="eggNOG" id="COG2926">
    <property type="taxonomic scope" value="Bacteria"/>
</dbReference>
<dbReference type="HOGENOM" id="CLU_153146_0_0_6"/>
<dbReference type="OrthoDB" id="90485at2"/>
<dbReference type="Proteomes" id="UP000000230">
    <property type="component" value="Chromosome"/>
</dbReference>
<dbReference type="GO" id="GO:0005829">
    <property type="term" value="C:cytosol"/>
    <property type="evidence" value="ECO:0007669"/>
    <property type="project" value="TreeGrafter"/>
</dbReference>
<dbReference type="HAMAP" id="MF_00683">
    <property type="entry name" value="Pole_loc_TmaR"/>
    <property type="match status" value="1"/>
</dbReference>
<dbReference type="InterPro" id="IPR007458">
    <property type="entry name" value="DUF496"/>
</dbReference>
<dbReference type="InterPro" id="IPR053375">
    <property type="entry name" value="UPF0265"/>
</dbReference>
<dbReference type="NCBIfam" id="NF003844">
    <property type="entry name" value="PRK05423.1"/>
    <property type="match status" value="1"/>
</dbReference>
<dbReference type="NCBIfam" id="NF040881">
    <property type="entry name" value="PTS_reg_TmaR"/>
    <property type="match status" value="1"/>
</dbReference>
<dbReference type="PANTHER" id="PTHR39591">
    <property type="entry name" value="UPF0265 PROTEIN YEEX"/>
    <property type="match status" value="1"/>
</dbReference>
<dbReference type="PANTHER" id="PTHR39591:SF1">
    <property type="entry name" value="UPF0265 PROTEIN YEEX"/>
    <property type="match status" value="1"/>
</dbReference>
<dbReference type="Pfam" id="PF04363">
    <property type="entry name" value="DUF496"/>
    <property type="match status" value="1"/>
</dbReference>
<dbReference type="PIRSF" id="PIRSF028773">
    <property type="entry name" value="UCP028773"/>
    <property type="match status" value="1"/>
</dbReference>
<sequence>METTKPSFQDVLEFVRLFRRKNKLQREIQDVEKKIRDNQKRVLLLDNLSDYIKPGMSVEAIQGIIASMKTDYEDRVDDYIIKNAELSKERRDISKKLKVIGEIKSSEAKSE</sequence>
<evidence type="ECO:0000255" key="1">
    <source>
        <dbReference type="HAMAP-Rule" id="MF_00683"/>
    </source>
</evidence>
<comment type="function">
    <text evidence="1">Pole-localizer protein involved in the regulation of several cellular processes.</text>
</comment>
<comment type="subcellular location">
    <subcellularLocation>
        <location evidence="1">Cytoplasm</location>
    </subcellularLocation>
</comment>
<comment type="similarity">
    <text evidence="1">Belongs to the pole-localizer TmaR family.</text>
</comment>
<feature type="chain" id="PRO_1000061978" description="Pole-localizer protein TmaR">
    <location>
        <begin position="1"/>
        <end position="111"/>
    </location>
</feature>
<feature type="coiled-coil region" evidence="1">
    <location>
        <begin position="14"/>
        <end position="41"/>
    </location>
</feature>
<gene>
    <name evidence="1" type="primary">tmaR</name>
    <name type="ordered locus">Ent638_2575</name>
</gene>
<protein>
    <recommendedName>
        <fullName evidence="1">Pole-localizer protein TmaR</fullName>
    </recommendedName>
</protein>
<organism>
    <name type="scientific">Enterobacter sp. (strain 638)</name>
    <dbReference type="NCBI Taxonomy" id="399742"/>
    <lineage>
        <taxon>Bacteria</taxon>
        <taxon>Pseudomonadati</taxon>
        <taxon>Pseudomonadota</taxon>
        <taxon>Gammaproteobacteria</taxon>
        <taxon>Enterobacterales</taxon>
        <taxon>Enterobacteriaceae</taxon>
        <taxon>Enterobacter</taxon>
    </lineage>
</organism>